<dbReference type="EMBL" id="X17255">
    <property type="protein sequence ID" value="CAA35138.1"/>
    <property type="molecule type" value="Genomic_DNA"/>
</dbReference>
<dbReference type="PIR" id="S07510">
    <property type="entry name" value="S07510"/>
</dbReference>
<dbReference type="RefSeq" id="NP_523318.1">
    <property type="nucleotide sequence ID" value="NC_003298.1"/>
</dbReference>
<dbReference type="SMR" id="P20317"/>
<dbReference type="KEGG" id="vg:927451"/>
<dbReference type="OrthoDB" id="25868at10239"/>
<dbReference type="InterPro" id="IPR035156">
    <property type="entry name" value="DUF5471"/>
</dbReference>
<dbReference type="Pfam" id="PF17565">
    <property type="entry name" value="DUF5471"/>
    <property type="match status" value="1"/>
</dbReference>
<proteinExistence type="predicted"/>
<organismHost>
    <name type="scientific">Escherichia coli</name>
    <dbReference type="NCBI Taxonomy" id="562"/>
</organismHost>
<sequence length="70" mass="7748">MFKFINTLGKLVVKLYFIEAKKLDKKAKADSQRAIELAKQSREKSDAAVSGVHKSAAIAAKAQSMSKFFE</sequence>
<protein>
    <recommendedName>
        <fullName>Gene 4.3 protein</fullName>
    </recommendedName>
</protein>
<reference key="1">
    <citation type="journal article" date="1989" name="J. Mol. Biol.">
        <title>Sequence of bacteriophage T3 DNA from gene 2.5 through gene 9.</title>
        <authorList>
            <person name="Beck P.J."/>
            <person name="Gonzalez S."/>
            <person name="Ward C.L."/>
            <person name="Molineux I.J."/>
        </authorList>
    </citation>
    <scope>NUCLEOTIDE SEQUENCE [GENOMIC DNA]</scope>
    <source>
        <strain>Luria</strain>
    </source>
</reference>
<gene>
    <name type="primary">4.3</name>
</gene>
<feature type="chain" id="PRO_0000106492" description="Gene 4.3 protein">
    <location>
        <begin position="1"/>
        <end position="70"/>
    </location>
</feature>
<organism>
    <name type="scientific">Enterobacteria phage T3</name>
    <name type="common">Bacteriophage T3</name>
    <dbReference type="NCBI Taxonomy" id="10759"/>
    <lineage>
        <taxon>Viruses</taxon>
        <taxon>Duplodnaviria</taxon>
        <taxon>Heunggongvirae</taxon>
        <taxon>Uroviricota</taxon>
        <taxon>Caudoviricetes</taxon>
        <taxon>Autographiviridae</taxon>
        <taxon>Studiervirinae</taxon>
        <taxon>Teetrevirus</taxon>
        <taxon>Teetrevirus T3</taxon>
    </lineage>
</organism>
<name>V43_BPT3</name>
<accession>P20317</accession>